<evidence type="ECO:0000255" key="1">
    <source>
        <dbReference type="HAMAP-Rule" id="MF_01277"/>
    </source>
</evidence>
<protein>
    <recommendedName>
        <fullName evidence="1">HTH-type transcriptional repressor PurR</fullName>
    </recommendedName>
    <alternativeName>
        <fullName evidence="1">Pur regulon repressor</fullName>
    </alternativeName>
    <alternativeName>
        <fullName evidence="1">Purine nucleotide synthesis repressor</fullName>
    </alternativeName>
</protein>
<accession>Q8Z6P1</accession>
<accession>Q7CA30</accession>
<sequence length="341" mass="38032">MATIKDVAKRANVSTTTVSHVINKTRFVAEETRNAVWAAIKELHYSPSAVARSLKVNHTKSIGLLATSSEAAYFAEIIEAVEKNCFQKGYTLILGNAWNNLEKQRAYLSMMAQKRVDGLLVMCSEYPEPLLSMLEEYRHIPMVVMDWGEAKADFTDTVIDNAFAGGYMAGRYLVERGHRDIGVIPGPLERNTGAGRLAGFMKAMEEALINVPDNWIVQGDFEPESGYHAMQQILSQSHRPTAVFCGGDIMAMGALCAADEMGLRVPQDVSVIGYDNVRNARFFTPALTTIHQPKDSLGETAFNMLLDRIVNKREESQSIEVHPRLVERRSVADGPFRDYRR</sequence>
<comment type="function">
    <text evidence="1">Is the main repressor of the genes involved in the de novo synthesis of purine nucleotides, regulating purB, purC, purEK, purF, purHD, purL, purMN and guaBA expression. PurR is allosterically activated to bind its cognate DNA by binding the purine corepressors, hypoxanthine or guanine, thereby effecting transcription repression.</text>
</comment>
<comment type="pathway">
    <text>Purine metabolism; purine nucleotide biosynthesis [regulation].</text>
</comment>
<comment type="subunit">
    <text evidence="1">Homodimer.</text>
</comment>
<comment type="domain">
    <text evidence="1">Consists of two structural and functional domains: an N-terminal DNA-binding domain, approximately the first 60 residues, and a larger C-terminal domain, approximately 280 residues, which imparts the function of corepressor binding and oligomerization.</text>
</comment>
<gene>
    <name evidence="1" type="primary">purR</name>
    <name type="ordered locus">STY1692</name>
    <name type="ordered locus">t1298</name>
</gene>
<reference key="1">
    <citation type="journal article" date="2001" name="Nature">
        <title>Complete genome sequence of a multiple drug resistant Salmonella enterica serovar Typhi CT18.</title>
        <authorList>
            <person name="Parkhill J."/>
            <person name="Dougan G."/>
            <person name="James K.D."/>
            <person name="Thomson N.R."/>
            <person name="Pickard D."/>
            <person name="Wain J."/>
            <person name="Churcher C.M."/>
            <person name="Mungall K.L."/>
            <person name="Bentley S.D."/>
            <person name="Holden M.T.G."/>
            <person name="Sebaihia M."/>
            <person name="Baker S."/>
            <person name="Basham D."/>
            <person name="Brooks K."/>
            <person name="Chillingworth T."/>
            <person name="Connerton P."/>
            <person name="Cronin A."/>
            <person name="Davis P."/>
            <person name="Davies R.M."/>
            <person name="Dowd L."/>
            <person name="White N."/>
            <person name="Farrar J."/>
            <person name="Feltwell T."/>
            <person name="Hamlin N."/>
            <person name="Haque A."/>
            <person name="Hien T.T."/>
            <person name="Holroyd S."/>
            <person name="Jagels K."/>
            <person name="Krogh A."/>
            <person name="Larsen T.S."/>
            <person name="Leather S."/>
            <person name="Moule S."/>
            <person name="O'Gaora P."/>
            <person name="Parry C."/>
            <person name="Quail M.A."/>
            <person name="Rutherford K.M."/>
            <person name="Simmonds M."/>
            <person name="Skelton J."/>
            <person name="Stevens K."/>
            <person name="Whitehead S."/>
            <person name="Barrell B.G."/>
        </authorList>
    </citation>
    <scope>NUCLEOTIDE SEQUENCE [LARGE SCALE GENOMIC DNA]</scope>
    <source>
        <strain>CT18</strain>
    </source>
</reference>
<reference key="2">
    <citation type="journal article" date="2003" name="J. Bacteriol.">
        <title>Comparative genomics of Salmonella enterica serovar Typhi strains Ty2 and CT18.</title>
        <authorList>
            <person name="Deng W."/>
            <person name="Liou S.-R."/>
            <person name="Plunkett G. III"/>
            <person name="Mayhew G.F."/>
            <person name="Rose D.J."/>
            <person name="Burland V."/>
            <person name="Kodoyianni V."/>
            <person name="Schwartz D.C."/>
            <person name="Blattner F.R."/>
        </authorList>
    </citation>
    <scope>NUCLEOTIDE SEQUENCE [LARGE SCALE GENOMIC DNA]</scope>
    <source>
        <strain>ATCC 700931 / Ty2</strain>
    </source>
</reference>
<feature type="chain" id="PRO_0000279667" description="HTH-type transcriptional repressor PurR">
    <location>
        <begin position="1"/>
        <end position="341"/>
    </location>
</feature>
<feature type="domain" description="HTH lacI-type" evidence="1">
    <location>
        <begin position="2"/>
        <end position="56"/>
    </location>
</feature>
<feature type="DNA-binding region" description="H-T-H motif" evidence="1">
    <location>
        <begin position="4"/>
        <end position="23"/>
    </location>
</feature>
<feature type="DNA-binding region" evidence="1">
    <location>
        <begin position="48"/>
        <end position="56"/>
    </location>
</feature>
<feature type="binding site" evidence="1">
    <location>
        <position position="73"/>
    </location>
    <ligand>
        <name>hypoxanthine</name>
        <dbReference type="ChEBI" id="CHEBI:17368"/>
    </ligand>
</feature>
<feature type="binding site" evidence="1">
    <location>
        <position position="190"/>
    </location>
    <ligand>
        <name>hypoxanthine</name>
        <dbReference type="ChEBI" id="CHEBI:17368"/>
    </ligand>
</feature>
<feature type="binding site" evidence="1">
    <location>
        <position position="192"/>
    </location>
    <ligand>
        <name>hypoxanthine</name>
        <dbReference type="ChEBI" id="CHEBI:17368"/>
    </ligand>
</feature>
<feature type="binding site" evidence="1">
    <location>
        <position position="221"/>
    </location>
    <ligand>
        <name>hypoxanthine</name>
        <dbReference type="ChEBI" id="CHEBI:17368"/>
    </ligand>
</feature>
<feature type="binding site" evidence="1">
    <location>
        <position position="275"/>
    </location>
    <ligand>
        <name>hypoxanthine</name>
        <dbReference type="ChEBI" id="CHEBI:17368"/>
    </ligand>
</feature>
<organism>
    <name type="scientific">Salmonella typhi</name>
    <dbReference type="NCBI Taxonomy" id="90370"/>
    <lineage>
        <taxon>Bacteria</taxon>
        <taxon>Pseudomonadati</taxon>
        <taxon>Pseudomonadota</taxon>
        <taxon>Gammaproteobacteria</taxon>
        <taxon>Enterobacterales</taxon>
        <taxon>Enterobacteriaceae</taxon>
        <taxon>Salmonella</taxon>
    </lineage>
</organism>
<dbReference type="EMBL" id="AL513382">
    <property type="protein sequence ID" value="CAD01937.1"/>
    <property type="molecule type" value="Genomic_DNA"/>
</dbReference>
<dbReference type="EMBL" id="AE014613">
    <property type="protein sequence ID" value="AAO68948.1"/>
    <property type="molecule type" value="Genomic_DNA"/>
</dbReference>
<dbReference type="RefSeq" id="NP_456100.1">
    <property type="nucleotide sequence ID" value="NC_003198.1"/>
</dbReference>
<dbReference type="RefSeq" id="WP_000190992.1">
    <property type="nucleotide sequence ID" value="NZ_WSUR01000011.1"/>
</dbReference>
<dbReference type="SMR" id="Q8Z6P1"/>
<dbReference type="STRING" id="220341.gene:17585627"/>
<dbReference type="KEGG" id="stt:t1298"/>
<dbReference type="KEGG" id="sty:STY1692"/>
<dbReference type="PATRIC" id="fig|220341.7.peg.1702"/>
<dbReference type="eggNOG" id="COG1609">
    <property type="taxonomic scope" value="Bacteria"/>
</dbReference>
<dbReference type="HOGENOM" id="CLU_037628_6_2_6"/>
<dbReference type="OMA" id="ARWVGPP"/>
<dbReference type="OrthoDB" id="9798934at2"/>
<dbReference type="UniPathway" id="UPA00488"/>
<dbReference type="Proteomes" id="UP000000541">
    <property type="component" value="Chromosome"/>
</dbReference>
<dbReference type="Proteomes" id="UP000002670">
    <property type="component" value="Chromosome"/>
</dbReference>
<dbReference type="GO" id="GO:0003700">
    <property type="term" value="F:DNA-binding transcription factor activity"/>
    <property type="evidence" value="ECO:0007669"/>
    <property type="project" value="TreeGrafter"/>
</dbReference>
<dbReference type="GO" id="GO:0000976">
    <property type="term" value="F:transcription cis-regulatory region binding"/>
    <property type="evidence" value="ECO:0007669"/>
    <property type="project" value="TreeGrafter"/>
</dbReference>
<dbReference type="GO" id="GO:0045892">
    <property type="term" value="P:negative regulation of DNA-templated transcription"/>
    <property type="evidence" value="ECO:0007669"/>
    <property type="project" value="UniProtKB-UniRule"/>
</dbReference>
<dbReference type="GO" id="GO:0006164">
    <property type="term" value="P:purine nucleotide biosynthetic process"/>
    <property type="evidence" value="ECO:0007669"/>
    <property type="project" value="UniProtKB-UniPathway"/>
</dbReference>
<dbReference type="CDD" id="cd01392">
    <property type="entry name" value="HTH_LacI"/>
    <property type="match status" value="1"/>
</dbReference>
<dbReference type="CDD" id="cd06275">
    <property type="entry name" value="PBP1_PurR"/>
    <property type="match status" value="1"/>
</dbReference>
<dbReference type="FunFam" id="1.10.260.40:FF:000002">
    <property type="entry name" value="HTH-type transcriptional repressor PurR"/>
    <property type="match status" value="1"/>
</dbReference>
<dbReference type="FunFam" id="3.40.50.2300:FF:000045">
    <property type="entry name" value="HTH-type transcriptional repressor PurR"/>
    <property type="match status" value="1"/>
</dbReference>
<dbReference type="Gene3D" id="3.40.50.2300">
    <property type="match status" value="2"/>
</dbReference>
<dbReference type="Gene3D" id="1.10.260.40">
    <property type="entry name" value="lambda repressor-like DNA-binding domains"/>
    <property type="match status" value="1"/>
</dbReference>
<dbReference type="HAMAP" id="MF_01277">
    <property type="entry name" value="HTH_type_PurR"/>
    <property type="match status" value="1"/>
</dbReference>
<dbReference type="InterPro" id="IPR000843">
    <property type="entry name" value="HTH_LacI"/>
</dbReference>
<dbReference type="InterPro" id="IPR046335">
    <property type="entry name" value="LacI/GalR-like_sensor"/>
</dbReference>
<dbReference type="InterPro" id="IPR010982">
    <property type="entry name" value="Lambda_DNA-bd_dom_sf"/>
</dbReference>
<dbReference type="InterPro" id="IPR028082">
    <property type="entry name" value="Peripla_BP_I"/>
</dbReference>
<dbReference type="InterPro" id="IPR023588">
    <property type="entry name" value="Tscrpt_reg_HTH_PurR"/>
</dbReference>
<dbReference type="NCBIfam" id="NF007979">
    <property type="entry name" value="PRK10703.1"/>
    <property type="match status" value="1"/>
</dbReference>
<dbReference type="PANTHER" id="PTHR30146:SF148">
    <property type="entry name" value="HTH-TYPE TRANSCRIPTIONAL REPRESSOR PURR-RELATED"/>
    <property type="match status" value="1"/>
</dbReference>
<dbReference type="PANTHER" id="PTHR30146">
    <property type="entry name" value="LACI-RELATED TRANSCRIPTIONAL REPRESSOR"/>
    <property type="match status" value="1"/>
</dbReference>
<dbReference type="Pfam" id="PF00356">
    <property type="entry name" value="LacI"/>
    <property type="match status" value="1"/>
</dbReference>
<dbReference type="Pfam" id="PF13377">
    <property type="entry name" value="Peripla_BP_3"/>
    <property type="match status" value="1"/>
</dbReference>
<dbReference type="PRINTS" id="PR00036">
    <property type="entry name" value="HTHLACI"/>
</dbReference>
<dbReference type="SMART" id="SM00354">
    <property type="entry name" value="HTH_LACI"/>
    <property type="match status" value="1"/>
</dbReference>
<dbReference type="SUPFAM" id="SSF47413">
    <property type="entry name" value="lambda repressor-like DNA-binding domains"/>
    <property type="match status" value="1"/>
</dbReference>
<dbReference type="SUPFAM" id="SSF53822">
    <property type="entry name" value="Periplasmic binding protein-like I"/>
    <property type="match status" value="1"/>
</dbReference>
<dbReference type="PROSITE" id="PS00356">
    <property type="entry name" value="HTH_LACI_1"/>
    <property type="match status" value="1"/>
</dbReference>
<dbReference type="PROSITE" id="PS50932">
    <property type="entry name" value="HTH_LACI_2"/>
    <property type="match status" value="1"/>
</dbReference>
<name>PURR_SALTI</name>
<keyword id="KW-0238">DNA-binding</keyword>
<keyword id="KW-0658">Purine biosynthesis</keyword>
<keyword id="KW-0678">Repressor</keyword>
<keyword id="KW-0804">Transcription</keyword>
<keyword id="KW-0805">Transcription regulation</keyword>
<proteinExistence type="inferred from homology"/>